<name>GLYG_HUMAN</name>
<proteinExistence type="evidence at protein level"/>
<comment type="function">
    <text evidence="6 8">Glycogenin participates in the glycogen biosynthetic process along with glycogen synthase and glycogen branching enzyme. It catalyzes the formation of a short alpha (1,4)-glucosyl chain covalently attached via a glucose 1-O-tyrosyl linkage to internal tyrosine residues and these chains act as primers for the elongation reaction catalyzed by glycogen synthase.</text>
</comment>
<comment type="catalytic activity">
    <reaction evidence="6 8">
        <text>L-tyrosyl-[glycogenin] + UDP-alpha-D-glucose = alpha-D-glucosyl-L-tyrosyl-[glycogenin] + UDP + H(+)</text>
        <dbReference type="Rhea" id="RHEA:23360"/>
        <dbReference type="Rhea" id="RHEA-COMP:14604"/>
        <dbReference type="Rhea" id="RHEA-COMP:14605"/>
        <dbReference type="ChEBI" id="CHEBI:15378"/>
        <dbReference type="ChEBI" id="CHEBI:46858"/>
        <dbReference type="ChEBI" id="CHEBI:58223"/>
        <dbReference type="ChEBI" id="CHEBI:58885"/>
        <dbReference type="ChEBI" id="CHEBI:140573"/>
        <dbReference type="EC" id="2.4.1.186"/>
    </reaction>
    <physiologicalReaction direction="left-to-right" evidence="6 8">
        <dbReference type="Rhea" id="RHEA:23361"/>
    </physiologicalReaction>
</comment>
<comment type="catalytic activity">
    <reaction evidence="6 8">
        <text>[1,4-alpha-D-glucosyl](n)-L-tyrosyl-[glycogenin] + UDP-alpha-D-glucose = [1,4-alpha-D-glucosyl](n+1)-L-tyrosyl-[glycogenin] + UDP + H(+)</text>
        <dbReference type="Rhea" id="RHEA:56560"/>
        <dbReference type="Rhea" id="RHEA-COMP:14606"/>
        <dbReference type="Rhea" id="RHEA-COMP:14607"/>
        <dbReference type="ChEBI" id="CHEBI:15378"/>
        <dbReference type="ChEBI" id="CHEBI:58223"/>
        <dbReference type="ChEBI" id="CHEBI:58885"/>
        <dbReference type="ChEBI" id="CHEBI:140574"/>
        <dbReference type="EC" id="2.4.1.186"/>
    </reaction>
    <physiologicalReaction direction="left-to-right" evidence="6 8">
        <dbReference type="Rhea" id="RHEA:56561"/>
    </physiologicalReaction>
</comment>
<comment type="cofactor">
    <cofactor evidence="6 8">
        <name>Mn(2+)</name>
        <dbReference type="ChEBI" id="CHEBI:29035"/>
    </cofactor>
    <text>Divalent metal ions. Required for self-glucosylation. Manganese is the most effective.</text>
</comment>
<comment type="activity regulation">
    <text evidence="8">Inhibited by palladium ions.</text>
</comment>
<comment type="pathway">
    <text evidence="6 8">Glycan biosynthesis; glycogen biosynthesis.</text>
</comment>
<comment type="subunit">
    <text evidence="3 4 6 9 10">Part of the GYS1-GYG1 complex, a heterooctamer composed of a tetramer of GYS1 and 2 dimers of GYG1, where each GYS1 protomer binds to one GYG1 subunit (via GYG1 C-terminus); the GYS1 tetramer may dissociate from GYG1 dimers to continue glycogen polymerization on its own (PubMed:17055998, PubMed:22160680, PubMed:35690592, PubMed:35835870). May also form a heterooctamer complex with GYS2 (via GYG1 C-terminus) (By similarity).</text>
</comment>
<comment type="interaction">
    <interactant intactId="EBI-740533">
        <id>P46976</id>
    </interactant>
    <interactant intactId="EBI-740553">
        <id>P13807</id>
        <label>GYS1</label>
    </interactant>
    <organismsDiffer>false</organismsDiffer>
    <experiments>9</experiments>
</comment>
<comment type="interaction">
    <interactant intactId="EBI-12017394">
        <id>P46976-2</id>
    </interactant>
    <interactant intactId="EBI-740553">
        <id>P13807</id>
        <label>GYS1</label>
    </interactant>
    <organismsDiffer>false</organismsDiffer>
    <experiments>3</experiments>
</comment>
<comment type="subcellular location">
    <subcellularLocation>
        <location evidence="2">Cytoplasm</location>
    </subcellularLocation>
    <subcellularLocation>
        <location evidence="2">Nucleus</location>
    </subcellularLocation>
    <text evidence="1 2">Localizes to glycogen granules (glycosomes) in the cytoplasm (By similarity). Cytosolic localization is dependent on the actin cytoskeleton (By similarity).</text>
</comment>
<comment type="alternative products">
    <event type="alternative splicing"/>
    <isoform>
        <id>P46976-1</id>
        <name>GN-1L</name>
        <sequence type="displayed"/>
    </isoform>
    <isoform>
        <id>P46976-2</id>
        <name>GN-1</name>
        <sequence type="described" ref="VSP_001769"/>
    </isoform>
    <isoform>
        <id>P46976-3</id>
        <name>GN-1S</name>
        <sequence type="described" ref="VSP_001768"/>
    </isoform>
</comment>
<comment type="tissue specificity">
    <text evidence="11">Highly expressed in skeletal muscle and heart, with lower levels in brain, lung, kidney and pancreas.</text>
</comment>
<comment type="PTM">
    <text evidence="6 8">Self-glycosylated by the transfer of glucose residues from UDP-glucose to itself, forming an alpha-1,4-glycan of around 10 residues attached to Tyr-195.</text>
</comment>
<comment type="PTM">
    <text evidence="2">Phosphorylated.</text>
</comment>
<comment type="disease" evidence="5 6">
    <disease id="DI-02773">
        <name>Glycogen storage disease 15</name>
        <acronym>GSD15</acronym>
        <description>A metabolic disorder resulting in muscle weakness, associated with the glycogen depletion in skeletal muscle, and cardiac arrhythmia, associated with the accumulation of abnormal storage material in the heart. The skeletal muscle shows a marked predominance of slow-twitch, oxidative muscle fibers and mitochondrial proliferation.</description>
        <dbReference type="MIM" id="613507"/>
    </disease>
    <text>The disease is caused by variants affecting the gene represented in this entry.</text>
</comment>
<comment type="disease" evidence="7">
    <disease id="DI-04312">
        <name>Polyglucosan body myopathy 2</name>
        <acronym>PGBM2</acronym>
        <description>A glycogen storage disease characterized by polyglucosan accumulation in muscle, and skeletal myopathy without cardiac involvement. Most patients manifest slowly progressive, hip girdle, shoulder girdle, and/or hand and leg muscle weakness. Polyglucosan contains abnormally long and poorly branched glucosyl chains and is variably resistant to digestion by alpha-amylase.</description>
        <dbReference type="MIM" id="616199"/>
    </disease>
    <text>The disease is caused by variants affecting the gene represented in this entry.</text>
</comment>
<comment type="similarity">
    <text evidence="16">Belongs to the glycosyltransferase 8 family. Glycogenin subfamily.</text>
</comment>
<keyword id="KW-0002">3D-structure</keyword>
<keyword id="KW-0007">Acetylation</keyword>
<keyword id="KW-0025">Alternative splicing</keyword>
<keyword id="KW-0963">Cytoplasm</keyword>
<keyword id="KW-0225">Disease variant</keyword>
<keyword id="KW-0320">Glycogen biosynthesis</keyword>
<keyword id="KW-0322">Glycogen storage disease</keyword>
<keyword id="KW-0325">Glycoprotein</keyword>
<keyword id="KW-0464">Manganese</keyword>
<keyword id="KW-0479">Metal-binding</keyword>
<keyword id="KW-0539">Nucleus</keyword>
<keyword id="KW-0597">Phosphoprotein</keyword>
<keyword id="KW-1267">Proteomics identification</keyword>
<keyword id="KW-1185">Reference proteome</keyword>
<keyword id="KW-0808">Transferase</keyword>
<organism>
    <name type="scientific">Homo sapiens</name>
    <name type="common">Human</name>
    <dbReference type="NCBI Taxonomy" id="9606"/>
    <lineage>
        <taxon>Eukaryota</taxon>
        <taxon>Metazoa</taxon>
        <taxon>Chordata</taxon>
        <taxon>Craniata</taxon>
        <taxon>Vertebrata</taxon>
        <taxon>Euteleostomi</taxon>
        <taxon>Mammalia</taxon>
        <taxon>Eutheria</taxon>
        <taxon>Euarchontoglires</taxon>
        <taxon>Primates</taxon>
        <taxon>Haplorrhini</taxon>
        <taxon>Catarrhini</taxon>
        <taxon>Hominidae</taxon>
        <taxon>Homo</taxon>
    </lineage>
</organism>
<protein>
    <recommendedName>
        <fullName evidence="17">Glycogenin-1</fullName>
        <shortName>GN-1</shortName>
        <shortName>GN1</shortName>
        <ecNumber evidence="6 8">2.4.1.186</ecNumber>
    </recommendedName>
</protein>
<dbReference type="EC" id="2.4.1.186" evidence="6 8"/>
<dbReference type="EMBL" id="U44131">
    <property type="protein sequence ID" value="AAB00114.1"/>
    <property type="molecule type" value="mRNA"/>
</dbReference>
<dbReference type="EMBL" id="U31525">
    <property type="protein sequence ID" value="AAB09752.1"/>
    <property type="molecule type" value="mRNA"/>
</dbReference>
<dbReference type="EMBL" id="X79537">
    <property type="protein sequence ID" value="CAA56073.1"/>
    <property type="molecule type" value="mRNA"/>
</dbReference>
<dbReference type="EMBL" id="AF065481">
    <property type="protein sequence ID" value="AAD31084.1"/>
    <property type="molecule type" value="Genomic_DNA"/>
</dbReference>
<dbReference type="EMBL" id="AF065476">
    <property type="protein sequence ID" value="AAD31084.1"/>
    <property type="status" value="JOINED"/>
    <property type="molecule type" value="Genomic_DNA"/>
</dbReference>
<dbReference type="EMBL" id="AF065477">
    <property type="protein sequence ID" value="AAD31084.1"/>
    <property type="status" value="JOINED"/>
    <property type="molecule type" value="Genomic_DNA"/>
</dbReference>
<dbReference type="EMBL" id="AF065478">
    <property type="protein sequence ID" value="AAD31084.1"/>
    <property type="status" value="JOINED"/>
    <property type="molecule type" value="Genomic_DNA"/>
</dbReference>
<dbReference type="EMBL" id="AF065479">
    <property type="protein sequence ID" value="AAD31084.1"/>
    <property type="status" value="JOINED"/>
    <property type="molecule type" value="Genomic_DNA"/>
</dbReference>
<dbReference type="EMBL" id="AF065480">
    <property type="protein sequence ID" value="AAD31084.1"/>
    <property type="status" value="JOINED"/>
    <property type="molecule type" value="Genomic_DNA"/>
</dbReference>
<dbReference type="EMBL" id="AF087942">
    <property type="protein sequence ID" value="AAD52093.1"/>
    <property type="molecule type" value="mRNA"/>
</dbReference>
<dbReference type="EMBL" id="CR536547">
    <property type="protein sequence ID" value="CAG38784.1"/>
    <property type="molecule type" value="mRNA"/>
</dbReference>
<dbReference type="EMBL" id="AC021059">
    <property type="status" value="NOT_ANNOTATED_CDS"/>
    <property type="molecule type" value="Genomic_DNA"/>
</dbReference>
<dbReference type="EMBL" id="CH471052">
    <property type="protein sequence ID" value="EAW78894.1"/>
    <property type="molecule type" value="Genomic_DNA"/>
</dbReference>
<dbReference type="EMBL" id="CH471052">
    <property type="protein sequence ID" value="EAW78895.1"/>
    <property type="molecule type" value="Genomic_DNA"/>
</dbReference>
<dbReference type="EMBL" id="CH471052">
    <property type="protein sequence ID" value="EAW78896.1"/>
    <property type="molecule type" value="Genomic_DNA"/>
</dbReference>
<dbReference type="EMBL" id="CH471052">
    <property type="protein sequence ID" value="EAW78898.1"/>
    <property type="molecule type" value="Genomic_DNA"/>
</dbReference>
<dbReference type="EMBL" id="CH471052">
    <property type="protein sequence ID" value="EAW78900.1"/>
    <property type="molecule type" value="Genomic_DNA"/>
</dbReference>
<dbReference type="EMBL" id="CH471052">
    <property type="protein sequence ID" value="EAW78901.1"/>
    <property type="molecule type" value="Genomic_DNA"/>
</dbReference>
<dbReference type="EMBL" id="BC000033">
    <property type="protein sequence ID" value="AAH00033.1"/>
    <property type="molecule type" value="mRNA"/>
</dbReference>
<dbReference type="CCDS" id="CCDS3139.1">
    <molecule id="P46976-1"/>
</dbReference>
<dbReference type="CCDS" id="CCDS54654.1">
    <molecule id="P46976-2"/>
</dbReference>
<dbReference type="CCDS" id="CCDS54655.1">
    <molecule id="P46976-3"/>
</dbReference>
<dbReference type="PIR" id="JC4695">
    <property type="entry name" value="JC4695"/>
</dbReference>
<dbReference type="RefSeq" id="NP_001171649.1">
    <molecule id="P46976-2"/>
    <property type="nucleotide sequence ID" value="NM_001184720.2"/>
</dbReference>
<dbReference type="RefSeq" id="NP_001171650.1">
    <molecule id="P46976-3"/>
    <property type="nucleotide sequence ID" value="NM_001184721.2"/>
</dbReference>
<dbReference type="RefSeq" id="NP_004121.2">
    <molecule id="P46976-1"/>
    <property type="nucleotide sequence ID" value="NM_004130.3"/>
</dbReference>
<dbReference type="PDB" id="3Q4S">
    <property type="method" value="X-ray"/>
    <property type="resolution" value="1.98 A"/>
    <property type="chains" value="A=1-262"/>
</dbReference>
<dbReference type="PDB" id="3QVB">
    <property type="method" value="X-ray"/>
    <property type="resolution" value="2.26 A"/>
    <property type="chains" value="A=1-262"/>
</dbReference>
<dbReference type="PDB" id="3RMV">
    <property type="method" value="X-ray"/>
    <property type="resolution" value="1.82 A"/>
    <property type="chains" value="A=1-262"/>
</dbReference>
<dbReference type="PDB" id="3RMW">
    <property type="method" value="X-ray"/>
    <property type="resolution" value="1.93 A"/>
    <property type="chains" value="A=1-262"/>
</dbReference>
<dbReference type="PDB" id="3T7M">
    <property type="method" value="X-ray"/>
    <property type="resolution" value="1.80 A"/>
    <property type="chains" value="A/B=1-262"/>
</dbReference>
<dbReference type="PDB" id="3T7N">
    <property type="method" value="X-ray"/>
    <property type="resolution" value="1.98 A"/>
    <property type="chains" value="A/B=1-262"/>
</dbReference>
<dbReference type="PDB" id="3T7O">
    <property type="method" value="X-ray"/>
    <property type="resolution" value="1.85 A"/>
    <property type="chains" value="A/B=1-262"/>
</dbReference>
<dbReference type="PDB" id="3U2T">
    <property type="method" value="X-ray"/>
    <property type="resolution" value="2.05 A"/>
    <property type="chains" value="A=1-262"/>
</dbReference>
<dbReference type="PDB" id="3U2U">
    <property type="method" value="X-ray"/>
    <property type="resolution" value="1.45 A"/>
    <property type="chains" value="A/B=1-262"/>
</dbReference>
<dbReference type="PDB" id="3U2V">
    <property type="method" value="X-ray"/>
    <property type="resolution" value="1.50 A"/>
    <property type="chains" value="A/B=1-262"/>
</dbReference>
<dbReference type="PDB" id="3U2W">
    <property type="method" value="X-ray"/>
    <property type="resolution" value="1.68 A"/>
    <property type="chains" value="A/B=1-262"/>
</dbReference>
<dbReference type="PDB" id="3U2X">
    <property type="method" value="X-ray"/>
    <property type="resolution" value="1.77 A"/>
    <property type="chains" value="A/B=1-262"/>
</dbReference>
<dbReference type="PDB" id="6EQJ">
    <property type="method" value="X-ray"/>
    <property type="resolution" value="2.18 A"/>
    <property type="chains" value="A=1-262"/>
</dbReference>
<dbReference type="PDB" id="6EQL">
    <property type="method" value="X-ray"/>
    <property type="resolution" value="2.38 A"/>
    <property type="chains" value="A/B=1-262"/>
</dbReference>
<dbReference type="PDB" id="7OVX">
    <property type="method" value="X-ray"/>
    <property type="resolution" value="1.70 A"/>
    <property type="chains" value="Q=339-350"/>
</dbReference>
<dbReference type="PDB" id="7Q0B">
    <property type="method" value="EM"/>
    <property type="resolution" value="3.00 A"/>
    <property type="chains" value="E/F/G/H=1-350"/>
</dbReference>
<dbReference type="PDB" id="7Q0S">
    <property type="method" value="EM"/>
    <property type="resolution" value="4.00 A"/>
    <property type="chains" value="E/F/G/H=1-350"/>
</dbReference>
<dbReference type="PDB" id="7Q12">
    <property type="method" value="EM"/>
    <property type="resolution" value="3.70 A"/>
    <property type="chains" value="E/F/G/H=1-350"/>
</dbReference>
<dbReference type="PDB" id="7Q13">
    <property type="method" value="EM"/>
    <property type="resolution" value="3.00 A"/>
    <property type="chains" value="E/F/G/H=1-350"/>
</dbReference>
<dbReference type="PDB" id="7ZBN">
    <property type="method" value="EM"/>
    <property type="resolution" value="2.62 A"/>
    <property type="chains" value="E/F/G/H=1-350"/>
</dbReference>
<dbReference type="PDB" id="8CVX">
    <property type="method" value="EM"/>
    <property type="resolution" value="3.50 A"/>
    <property type="chains" value="E/F/G/H=1-350"/>
</dbReference>
<dbReference type="PDB" id="8CVY">
    <property type="method" value="EM"/>
    <property type="resolution" value="3.60 A"/>
    <property type="chains" value="E/G/H=1-350"/>
</dbReference>
<dbReference type="PDB" id="8CVZ">
    <property type="method" value="EM"/>
    <property type="resolution" value="3.52 A"/>
    <property type="chains" value="E/F/G/H/I/J=1-350"/>
</dbReference>
<dbReference type="PDBsum" id="3Q4S"/>
<dbReference type="PDBsum" id="3QVB"/>
<dbReference type="PDBsum" id="3RMV"/>
<dbReference type="PDBsum" id="3RMW"/>
<dbReference type="PDBsum" id="3T7M"/>
<dbReference type="PDBsum" id="3T7N"/>
<dbReference type="PDBsum" id="3T7O"/>
<dbReference type="PDBsum" id="3U2T"/>
<dbReference type="PDBsum" id="3U2U"/>
<dbReference type="PDBsum" id="3U2V"/>
<dbReference type="PDBsum" id="3U2W"/>
<dbReference type="PDBsum" id="3U2X"/>
<dbReference type="PDBsum" id="6EQJ"/>
<dbReference type="PDBsum" id="6EQL"/>
<dbReference type="PDBsum" id="7OVX"/>
<dbReference type="PDBsum" id="7Q0B"/>
<dbReference type="PDBsum" id="7Q0S"/>
<dbReference type="PDBsum" id="7Q12"/>
<dbReference type="PDBsum" id="7Q13"/>
<dbReference type="PDBsum" id="7ZBN"/>
<dbReference type="PDBsum" id="8CVX"/>
<dbReference type="PDBsum" id="8CVY"/>
<dbReference type="PDBsum" id="8CVZ"/>
<dbReference type="EMDB" id="EMD-13743"/>
<dbReference type="EMDB" id="EMD-13751"/>
<dbReference type="EMDB" id="EMD-13752"/>
<dbReference type="EMDB" id="EMD-13753"/>
<dbReference type="EMDB" id="EMD-14587"/>
<dbReference type="EMDB" id="EMD-27020"/>
<dbReference type="EMDB" id="EMD-27021"/>
<dbReference type="EMDB" id="EMD-27022"/>
<dbReference type="SMR" id="P46976"/>
<dbReference type="BioGRID" id="109247">
    <property type="interactions" value="45"/>
</dbReference>
<dbReference type="FunCoup" id="P46976">
    <property type="interactions" value="617"/>
</dbReference>
<dbReference type="IntAct" id="P46976">
    <property type="interactions" value="36"/>
</dbReference>
<dbReference type="MINT" id="P46976"/>
<dbReference type="STRING" id="9606.ENSP00000340736"/>
<dbReference type="DrugBank" id="DB01861">
    <property type="generic name" value="Uridine diphosphate glucose"/>
</dbReference>
<dbReference type="DrugBank" id="DB03435">
    <property type="generic name" value="Uridine-5'-Diphosphate"/>
</dbReference>
<dbReference type="CAZy" id="GT8">
    <property type="family name" value="Glycosyltransferase Family 8"/>
</dbReference>
<dbReference type="GlyCosmos" id="P46976">
    <property type="glycosylation" value="1 site, No reported glycans"/>
</dbReference>
<dbReference type="GlyGen" id="P46976">
    <property type="glycosylation" value="2 sites, 1 O-linked glycan (1 site)"/>
</dbReference>
<dbReference type="iPTMnet" id="P46976"/>
<dbReference type="MetOSite" id="P46976"/>
<dbReference type="PhosphoSitePlus" id="P46976"/>
<dbReference type="BioMuta" id="GYG1"/>
<dbReference type="jPOST" id="P46976"/>
<dbReference type="MassIVE" id="P46976"/>
<dbReference type="PaxDb" id="9606-ENSP00000340736"/>
<dbReference type="PeptideAtlas" id="P46976"/>
<dbReference type="ProteomicsDB" id="12738"/>
<dbReference type="ProteomicsDB" id="55779">
    <molecule id="P46976-1"/>
</dbReference>
<dbReference type="ProteomicsDB" id="55780">
    <molecule id="P46976-2"/>
</dbReference>
<dbReference type="ProteomicsDB" id="55781">
    <molecule id="P46976-3"/>
</dbReference>
<dbReference type="Pumba" id="P46976"/>
<dbReference type="Antibodypedia" id="33551">
    <property type="antibodies" value="201 antibodies from 29 providers"/>
</dbReference>
<dbReference type="DNASU" id="2992"/>
<dbReference type="Ensembl" id="ENST00000296048.10">
    <molecule id="P46976-2"/>
    <property type="protein sequence ID" value="ENSP00000296048.6"/>
    <property type="gene ID" value="ENSG00000163754.18"/>
</dbReference>
<dbReference type="Ensembl" id="ENST00000345003.9">
    <molecule id="P46976-1"/>
    <property type="protein sequence ID" value="ENSP00000340736.4"/>
    <property type="gene ID" value="ENSG00000163754.18"/>
</dbReference>
<dbReference type="Ensembl" id="ENST00000484197.5">
    <molecule id="P46976-3"/>
    <property type="protein sequence ID" value="ENSP00000420683.1"/>
    <property type="gene ID" value="ENSG00000163754.18"/>
</dbReference>
<dbReference type="GeneID" id="2992"/>
<dbReference type="KEGG" id="hsa:2992"/>
<dbReference type="MANE-Select" id="ENST00000345003.9">
    <property type="protein sequence ID" value="ENSP00000340736.4"/>
    <property type="RefSeq nucleotide sequence ID" value="NM_004130.4"/>
    <property type="RefSeq protein sequence ID" value="NP_004121.2"/>
</dbReference>
<dbReference type="UCSC" id="uc003ewn.4">
    <molecule id="P46976-1"/>
    <property type="organism name" value="human"/>
</dbReference>
<dbReference type="AGR" id="HGNC:4699"/>
<dbReference type="CTD" id="2992"/>
<dbReference type="DisGeNET" id="2992"/>
<dbReference type="GeneCards" id="GYG1"/>
<dbReference type="HGNC" id="HGNC:4699">
    <property type="gene designation" value="GYG1"/>
</dbReference>
<dbReference type="HPA" id="ENSG00000163754">
    <property type="expression patterns" value="Tissue enhanced (skeletal muscle, tongue)"/>
</dbReference>
<dbReference type="MalaCards" id="GYG1"/>
<dbReference type="MIM" id="603942">
    <property type="type" value="gene"/>
</dbReference>
<dbReference type="MIM" id="613507">
    <property type="type" value="phenotype"/>
</dbReference>
<dbReference type="MIM" id="616199">
    <property type="type" value="phenotype"/>
</dbReference>
<dbReference type="neXtProt" id="NX_P46976"/>
<dbReference type="OpenTargets" id="ENSG00000163754"/>
<dbReference type="Orphanet" id="263297">
    <property type="disease" value="Glycogen storage disease with severe cardiomyopathy due to glycogenin deficiency"/>
</dbReference>
<dbReference type="Orphanet" id="456369">
    <property type="disease" value="Polyglucosan body myopathy type 2"/>
</dbReference>
<dbReference type="PharmGKB" id="PA29077"/>
<dbReference type="VEuPathDB" id="HostDB:ENSG00000163754"/>
<dbReference type="eggNOG" id="KOG1950">
    <property type="taxonomic scope" value="Eukaryota"/>
</dbReference>
<dbReference type="GeneTree" id="ENSGT00940000154674"/>
<dbReference type="InParanoid" id="P46976"/>
<dbReference type="OMA" id="MSQFAWV"/>
<dbReference type="OrthoDB" id="2014201at2759"/>
<dbReference type="PAN-GO" id="P46976">
    <property type="GO annotations" value="2 GO annotations based on evolutionary models"/>
</dbReference>
<dbReference type="PhylomeDB" id="P46976"/>
<dbReference type="TreeFam" id="TF312839"/>
<dbReference type="BioCyc" id="MetaCyc:HS08931-MONOMER"/>
<dbReference type="BRENDA" id="2.4.1.186">
    <property type="organism ID" value="2681"/>
</dbReference>
<dbReference type="PathwayCommons" id="P46976"/>
<dbReference type="Reactome" id="R-HSA-3322077">
    <property type="pathway name" value="Glycogen synthesis"/>
</dbReference>
<dbReference type="Reactome" id="R-HSA-3785653">
    <property type="pathway name" value="Myoclonic epilepsy of Lafora"/>
</dbReference>
<dbReference type="Reactome" id="R-HSA-3814836">
    <property type="pathway name" value="Glycogen storage disease type XV (GYG1)"/>
</dbReference>
<dbReference type="Reactome" id="R-HSA-3828062">
    <property type="pathway name" value="Glycogen storage disease type 0 (muscle GYS1)"/>
</dbReference>
<dbReference type="Reactome" id="R-HSA-5357609">
    <property type="pathway name" value="Glycogen storage disease type II (GAA)"/>
</dbReference>
<dbReference type="Reactome" id="R-HSA-6798695">
    <property type="pathway name" value="Neutrophil degranulation"/>
</dbReference>
<dbReference type="Reactome" id="R-HSA-70221">
    <property type="pathway name" value="Glycogen breakdown (glycogenolysis)"/>
</dbReference>
<dbReference type="SignaLink" id="P46976"/>
<dbReference type="UniPathway" id="UPA00164"/>
<dbReference type="BioGRID-ORCS" id="2992">
    <property type="hits" value="17 hits in 1156 CRISPR screens"/>
</dbReference>
<dbReference type="ChiTaRS" id="GYG1">
    <property type="organism name" value="human"/>
</dbReference>
<dbReference type="EvolutionaryTrace" id="P46976"/>
<dbReference type="GenomeRNAi" id="2992"/>
<dbReference type="Pharos" id="P46976">
    <property type="development level" value="Tbio"/>
</dbReference>
<dbReference type="PRO" id="PR:P46976"/>
<dbReference type="Proteomes" id="UP000005640">
    <property type="component" value="Chromosome 3"/>
</dbReference>
<dbReference type="RNAct" id="P46976">
    <property type="molecule type" value="protein"/>
</dbReference>
<dbReference type="Bgee" id="ENSG00000163754">
    <property type="expression patterns" value="Expressed in biceps brachii and 215 other cell types or tissues"/>
</dbReference>
<dbReference type="ExpressionAtlas" id="P46976">
    <property type="expression patterns" value="baseline and differential"/>
</dbReference>
<dbReference type="GO" id="GO:0005737">
    <property type="term" value="C:cytoplasm"/>
    <property type="evidence" value="ECO:0000250"/>
    <property type="project" value="UniProtKB"/>
</dbReference>
<dbReference type="GO" id="GO:0005829">
    <property type="term" value="C:cytosol"/>
    <property type="evidence" value="ECO:0000304"/>
    <property type="project" value="Reactome"/>
</dbReference>
<dbReference type="GO" id="GO:0005576">
    <property type="term" value="C:extracellular region"/>
    <property type="evidence" value="ECO:0000304"/>
    <property type="project" value="Reactome"/>
</dbReference>
<dbReference type="GO" id="GO:1904813">
    <property type="term" value="C:ficolin-1-rich granule lumen"/>
    <property type="evidence" value="ECO:0000304"/>
    <property type="project" value="Reactome"/>
</dbReference>
<dbReference type="GO" id="GO:0043202">
    <property type="term" value="C:lysosomal lumen"/>
    <property type="evidence" value="ECO:0000304"/>
    <property type="project" value="Reactome"/>
</dbReference>
<dbReference type="GO" id="GO:0016020">
    <property type="term" value="C:membrane"/>
    <property type="evidence" value="ECO:0007005"/>
    <property type="project" value="UniProtKB"/>
</dbReference>
<dbReference type="GO" id="GO:0005634">
    <property type="term" value="C:nucleus"/>
    <property type="evidence" value="ECO:0007669"/>
    <property type="project" value="UniProtKB-SubCell"/>
</dbReference>
<dbReference type="GO" id="GO:0034774">
    <property type="term" value="C:secretory granule lumen"/>
    <property type="evidence" value="ECO:0000304"/>
    <property type="project" value="Reactome"/>
</dbReference>
<dbReference type="GO" id="GO:0008466">
    <property type="term" value="F:glycogenin glucosyltransferase activity"/>
    <property type="evidence" value="ECO:0000314"/>
    <property type="project" value="UniProtKB"/>
</dbReference>
<dbReference type="GO" id="GO:0016757">
    <property type="term" value="F:glycosyltransferase activity"/>
    <property type="evidence" value="ECO:0000318"/>
    <property type="project" value="GO_Central"/>
</dbReference>
<dbReference type="GO" id="GO:0030145">
    <property type="term" value="F:manganese ion binding"/>
    <property type="evidence" value="ECO:0000314"/>
    <property type="project" value="UniProtKB"/>
</dbReference>
<dbReference type="GO" id="GO:0042803">
    <property type="term" value="F:protein homodimerization activity"/>
    <property type="evidence" value="ECO:0000314"/>
    <property type="project" value="UniProtKB"/>
</dbReference>
<dbReference type="GO" id="GO:0005978">
    <property type="term" value="P:glycogen biosynthetic process"/>
    <property type="evidence" value="ECO:0000315"/>
    <property type="project" value="UniProtKB"/>
</dbReference>
<dbReference type="CDD" id="cd02537">
    <property type="entry name" value="GT8_Glycogenin"/>
    <property type="match status" value="1"/>
</dbReference>
<dbReference type="FunFam" id="3.90.550.10:FF:000025">
    <property type="entry name" value="Glycogenin-1 isoform 1"/>
    <property type="match status" value="1"/>
</dbReference>
<dbReference type="Gene3D" id="3.90.550.10">
    <property type="entry name" value="Spore Coat Polysaccharide Biosynthesis Protein SpsA, Chain A"/>
    <property type="match status" value="1"/>
</dbReference>
<dbReference type="InterPro" id="IPR002495">
    <property type="entry name" value="Glyco_trans_8"/>
</dbReference>
<dbReference type="InterPro" id="IPR050587">
    <property type="entry name" value="GNT1/Glycosyltrans_8"/>
</dbReference>
<dbReference type="InterPro" id="IPR029044">
    <property type="entry name" value="Nucleotide-diphossugar_trans"/>
</dbReference>
<dbReference type="PANTHER" id="PTHR11183">
    <property type="entry name" value="GLYCOGENIN SUBFAMILY MEMBER"/>
    <property type="match status" value="1"/>
</dbReference>
<dbReference type="Pfam" id="PF01501">
    <property type="entry name" value="Glyco_transf_8"/>
    <property type="match status" value="2"/>
</dbReference>
<dbReference type="SUPFAM" id="SSF53448">
    <property type="entry name" value="Nucleotide-diphospho-sugar transferases"/>
    <property type="match status" value="1"/>
</dbReference>
<reference key="1">
    <citation type="journal article" date="1996" name="Biochem. Biophys. Res. Commun.">
        <title>The human skeletal muscle glycogenin gene: cDNA, tissue expression and chromosomal localization.</title>
        <authorList>
            <person name="Barbetti F."/>
            <person name="Rocchi M."/>
            <person name="Bossolasco M."/>
            <person name="Cordera R."/>
            <person name="Sbraccia P."/>
            <person name="Finelli P."/>
            <person name="Consalez G.G."/>
        </authorList>
    </citation>
    <scope>NUCLEOTIDE SEQUENCE [MRNA] (ISOFORM GN-1)</scope>
    <scope>TISSUE SPECIFICITY</scope>
    <source>
        <tissue>Skeletal muscle</tissue>
    </source>
</reference>
<reference key="2">
    <citation type="journal article" date="1996" name="Genomics">
        <title>The human intron-containing gene for glycogenin maps to chromosome 3, band q24.</title>
        <authorList>
            <person name="Lomako J."/>
            <person name="Mazuruk K."/>
            <person name="Lomako W.M."/>
            <person name="Alonso M.D."/>
            <person name="Whelan W.J."/>
            <person name="Rodriguez I.R."/>
        </authorList>
    </citation>
    <scope>NUCLEOTIDE SEQUENCE [MRNA] (ISOFORM GN-1)</scope>
</reference>
<reference key="3">
    <citation type="submission" date="1994-06" db="EMBL/GenBank/DDBJ databases">
        <authorList>
            <person name="Leffers H."/>
            <person name="Wiemann S."/>
            <person name="Ansorge W."/>
        </authorList>
    </citation>
    <scope>NUCLEOTIDE SEQUENCE [MRNA] (ISOFORM GN-1S)</scope>
    <source>
        <tissue>Skin</tissue>
    </source>
</reference>
<reference key="4">
    <citation type="journal article" date="1999" name="Gene">
        <title>Characterization of the human glycogenin-1 gene: identification of a muscle-specific regulatory domain.</title>
        <authorList>
            <person name="van Maanen M.-H."/>
            <person name="Fournier P.A."/>
            <person name="Palmer T.N."/>
            <person name="Abraham L.J."/>
        </authorList>
    </citation>
    <scope>NUCLEOTIDE SEQUENCE [GENOMIC DNA] (ISOFORM GN-1)</scope>
</reference>
<reference key="5">
    <citation type="journal article" date="2000" name="Gene">
        <title>Structure and chromosomal localization of the human glycogenin-2 gene GYG2.</title>
        <authorList>
            <person name="Zhai L."/>
            <person name="Mu J."/>
            <person name="Zong H."/>
            <person name="DePaoli-Roach A.A."/>
            <person name="Roach P.J."/>
        </authorList>
    </citation>
    <scope>NUCLEOTIDE SEQUENCE [MRNA] (ISOFORM GN-1L)</scope>
    <scope>ALTERNATIVE SPLICING</scope>
</reference>
<reference key="6">
    <citation type="submission" date="2004-06" db="EMBL/GenBank/DDBJ databases">
        <title>Cloning of human full open reading frames in Gateway(TM) system entry vector (pDONR201).</title>
        <authorList>
            <person name="Ebert L."/>
            <person name="Schick M."/>
            <person name="Neubert P."/>
            <person name="Schatten R."/>
            <person name="Henze S."/>
            <person name="Korn B."/>
        </authorList>
    </citation>
    <scope>NUCLEOTIDE SEQUENCE [LARGE SCALE MRNA] (ISOFORM GN-1)</scope>
</reference>
<reference key="7">
    <citation type="journal article" date="2006" name="Nature">
        <title>The DNA sequence, annotation and analysis of human chromosome 3.</title>
        <authorList>
            <person name="Muzny D.M."/>
            <person name="Scherer S.E."/>
            <person name="Kaul R."/>
            <person name="Wang J."/>
            <person name="Yu J."/>
            <person name="Sudbrak R."/>
            <person name="Buhay C.J."/>
            <person name="Chen R."/>
            <person name="Cree A."/>
            <person name="Ding Y."/>
            <person name="Dugan-Rocha S."/>
            <person name="Gill R."/>
            <person name="Gunaratne P."/>
            <person name="Harris R.A."/>
            <person name="Hawes A.C."/>
            <person name="Hernandez J."/>
            <person name="Hodgson A.V."/>
            <person name="Hume J."/>
            <person name="Jackson A."/>
            <person name="Khan Z.M."/>
            <person name="Kovar-Smith C."/>
            <person name="Lewis L.R."/>
            <person name="Lozado R.J."/>
            <person name="Metzker M.L."/>
            <person name="Milosavljevic A."/>
            <person name="Miner G.R."/>
            <person name="Morgan M.B."/>
            <person name="Nazareth L.V."/>
            <person name="Scott G."/>
            <person name="Sodergren E."/>
            <person name="Song X.-Z."/>
            <person name="Steffen D."/>
            <person name="Wei S."/>
            <person name="Wheeler D.A."/>
            <person name="Wright M.W."/>
            <person name="Worley K.C."/>
            <person name="Yuan Y."/>
            <person name="Zhang Z."/>
            <person name="Adams C.Q."/>
            <person name="Ansari-Lari M.A."/>
            <person name="Ayele M."/>
            <person name="Brown M.J."/>
            <person name="Chen G."/>
            <person name="Chen Z."/>
            <person name="Clendenning J."/>
            <person name="Clerc-Blankenburg K.P."/>
            <person name="Chen R."/>
            <person name="Chen Z."/>
            <person name="Davis C."/>
            <person name="Delgado O."/>
            <person name="Dinh H.H."/>
            <person name="Dong W."/>
            <person name="Draper H."/>
            <person name="Ernst S."/>
            <person name="Fu G."/>
            <person name="Gonzalez-Garay M.L."/>
            <person name="Garcia D.K."/>
            <person name="Gillett W."/>
            <person name="Gu J."/>
            <person name="Hao B."/>
            <person name="Haugen E."/>
            <person name="Havlak P."/>
            <person name="He X."/>
            <person name="Hennig S."/>
            <person name="Hu S."/>
            <person name="Huang W."/>
            <person name="Jackson L.R."/>
            <person name="Jacob L.S."/>
            <person name="Kelly S.H."/>
            <person name="Kube M."/>
            <person name="Levy R."/>
            <person name="Li Z."/>
            <person name="Liu B."/>
            <person name="Liu J."/>
            <person name="Liu W."/>
            <person name="Lu J."/>
            <person name="Maheshwari M."/>
            <person name="Nguyen B.-V."/>
            <person name="Okwuonu G.O."/>
            <person name="Palmeiri A."/>
            <person name="Pasternak S."/>
            <person name="Perez L.M."/>
            <person name="Phelps K.A."/>
            <person name="Plopper F.J."/>
            <person name="Qiang B."/>
            <person name="Raymond C."/>
            <person name="Rodriguez R."/>
            <person name="Saenphimmachak C."/>
            <person name="Santibanez J."/>
            <person name="Shen H."/>
            <person name="Shen Y."/>
            <person name="Subramanian S."/>
            <person name="Tabor P.E."/>
            <person name="Verduzco D."/>
            <person name="Waldron L."/>
            <person name="Wang J."/>
            <person name="Wang J."/>
            <person name="Wang Q."/>
            <person name="Williams G.A."/>
            <person name="Wong G.K.-S."/>
            <person name="Yao Z."/>
            <person name="Zhang J."/>
            <person name="Zhang X."/>
            <person name="Zhao G."/>
            <person name="Zhou J."/>
            <person name="Zhou Y."/>
            <person name="Nelson D."/>
            <person name="Lehrach H."/>
            <person name="Reinhardt R."/>
            <person name="Naylor S.L."/>
            <person name="Yang H."/>
            <person name="Olson M."/>
            <person name="Weinstock G."/>
            <person name="Gibbs R.A."/>
        </authorList>
    </citation>
    <scope>NUCLEOTIDE SEQUENCE [LARGE SCALE GENOMIC DNA]</scope>
</reference>
<reference key="8">
    <citation type="submission" date="2005-09" db="EMBL/GenBank/DDBJ databases">
        <authorList>
            <person name="Mural R.J."/>
            <person name="Istrail S."/>
            <person name="Sutton G.G."/>
            <person name="Florea L."/>
            <person name="Halpern A.L."/>
            <person name="Mobarry C.M."/>
            <person name="Lippert R."/>
            <person name="Walenz B."/>
            <person name="Shatkay H."/>
            <person name="Dew I."/>
            <person name="Miller J.R."/>
            <person name="Flanigan M.J."/>
            <person name="Edwards N.J."/>
            <person name="Bolanos R."/>
            <person name="Fasulo D."/>
            <person name="Halldorsson B.V."/>
            <person name="Hannenhalli S."/>
            <person name="Turner R."/>
            <person name="Yooseph S."/>
            <person name="Lu F."/>
            <person name="Nusskern D.R."/>
            <person name="Shue B.C."/>
            <person name="Zheng X.H."/>
            <person name="Zhong F."/>
            <person name="Delcher A.L."/>
            <person name="Huson D.H."/>
            <person name="Kravitz S.A."/>
            <person name="Mouchard L."/>
            <person name="Reinert K."/>
            <person name="Remington K.A."/>
            <person name="Clark A.G."/>
            <person name="Waterman M.S."/>
            <person name="Eichler E.E."/>
            <person name="Adams M.D."/>
            <person name="Hunkapiller M.W."/>
            <person name="Myers E.W."/>
            <person name="Venter J.C."/>
        </authorList>
    </citation>
    <scope>NUCLEOTIDE SEQUENCE [LARGE SCALE GENOMIC DNA]</scope>
</reference>
<reference key="9">
    <citation type="journal article" date="2004" name="Genome Res.">
        <title>The status, quality, and expansion of the NIH full-length cDNA project: the Mammalian Gene Collection (MGC).</title>
        <authorList>
            <consortium name="The MGC Project Team"/>
        </authorList>
    </citation>
    <scope>NUCLEOTIDE SEQUENCE [LARGE SCALE MRNA] (ISOFORM GN-1)</scope>
    <source>
        <tissue>Placenta</tissue>
    </source>
</reference>
<reference key="10">
    <citation type="journal article" date="2006" name="Arch. Biochem. Biophys.">
        <title>Interaction between glycogenin and glycogen synthase.</title>
        <authorList>
            <person name="Skurat A.V."/>
            <person name="Dietrich A.D."/>
            <person name="Roach P.J."/>
        </authorList>
    </citation>
    <scope>INTERACTION WITH GYS1</scope>
</reference>
<reference key="11">
    <citation type="journal article" date="2009" name="Anal. Chem.">
        <title>Lys-N and trypsin cover complementary parts of the phosphoproteome in a refined SCX-based approach.</title>
        <authorList>
            <person name="Gauci S."/>
            <person name="Helbig A.O."/>
            <person name="Slijper M."/>
            <person name="Krijgsveld J."/>
            <person name="Heck A.J."/>
            <person name="Mohammed S."/>
        </authorList>
    </citation>
    <scope>ACETYLATION [LARGE SCALE ANALYSIS] AT THR-2</scope>
    <scope>CLEAVAGE OF INITIATOR METHIONINE [LARGE SCALE ANALYSIS]</scope>
    <scope>IDENTIFICATION BY MASS SPECTROMETRY [LARGE SCALE ANALYSIS]</scope>
</reference>
<reference key="12">
    <citation type="journal article" date="2011" name="BMC Syst. Biol.">
        <title>Initial characterization of the human central proteome.</title>
        <authorList>
            <person name="Burkard T.R."/>
            <person name="Planyavsky M."/>
            <person name="Kaupe I."/>
            <person name="Breitwieser F.P."/>
            <person name="Buerckstuemmer T."/>
            <person name="Bennett K.L."/>
            <person name="Superti-Furga G."/>
            <person name="Colinge J."/>
        </authorList>
    </citation>
    <scope>IDENTIFICATION BY MASS SPECTROMETRY [LARGE SCALE ANALYSIS]</scope>
</reference>
<reference key="13">
    <citation type="journal article" date="2012" name="Mol. Cell. Proteomics">
        <title>Comparative large-scale characterisation of plant vs. mammal proteins reveals similar and idiosyncratic N-alpha acetylation features.</title>
        <authorList>
            <person name="Bienvenut W.V."/>
            <person name="Sumpton D."/>
            <person name="Martinez A."/>
            <person name="Lilla S."/>
            <person name="Espagne C."/>
            <person name="Meinnel T."/>
            <person name="Giglione C."/>
        </authorList>
    </citation>
    <scope>ACETYLATION [LARGE SCALE ANALYSIS] AT THR-2</scope>
    <scope>CLEAVAGE OF INITIATOR METHIONINE [LARGE SCALE ANALYSIS]</scope>
    <scope>IDENTIFICATION BY MASS SPECTROMETRY [LARGE SCALE ANALYSIS]</scope>
</reference>
<reference key="14">
    <citation type="journal article" date="2014" name="Ann. Neurol.">
        <title>A new muscle glycogen storage disease associated with glycogenin-1 deficiency.</title>
        <authorList>
            <person name="Malfatti E."/>
            <person name="Nilsson J."/>
            <person name="Hedberg-Oldfors C."/>
            <person name="Hernandez-Lain A."/>
            <person name="Michel F."/>
            <person name="Dominguez-Gonzalez C."/>
            <person name="Viennet G."/>
            <person name="Akman H.O."/>
            <person name="Kornblum C."/>
            <person name="Van den Bergh P."/>
            <person name="Romero N.B."/>
            <person name="Engel A.G."/>
            <person name="DiMauro S."/>
            <person name="Oldfors A."/>
        </authorList>
    </citation>
    <scope>INVOLVEMENT IN PGBM2</scope>
    <scope>VARIANTS PGBM2 PRO-16 AND HIS-102</scope>
</reference>
<reference evidence="23 24 25 26 27 28 29 30 31 32 33" key="15">
    <citation type="journal article" date="2011" name="Proc. Natl. Acad. Sci. U.S.A.">
        <title>Conformational plasticity of glycogenin and its maltosaccharide substrate during glycogen biogenesis.</title>
        <authorList>
            <person name="Chaikuad A."/>
            <person name="Froese D.S."/>
            <person name="Berridge G."/>
            <person name="von Delft F."/>
            <person name="Oppermann U."/>
            <person name="Yue W.W."/>
        </authorList>
    </citation>
    <scope>X-RAY CRYSTALLOGRAPHY (1.45 ANGSTROMS) OF 1-262 OF WILD-TYPE AND VARIANT GSD15 MET-83 IN COMPLEXES WITH MANGANESE; UDP AND UDP-ALPHA-D-GLUCOSE</scope>
    <scope>FUNCTION</scope>
    <scope>CATALYTIC ACTIVITY</scope>
    <scope>SUBUNIT</scope>
    <scope>PATHWAY</scope>
    <scope>GLYCOSYLATION AT TYR-195</scope>
    <scope>COFACTOR</scope>
    <scope>MUTAGENESIS OF TYR-195</scope>
    <scope>CHARACTERIZATION OF VARIANT GSD15 MET-83</scope>
</reference>
<reference evidence="34" key="16">
    <citation type="submission" date="2011-10" db="PDB data bank">
        <title>Crystal Structure of Human Glycogenin-1 (GYG1) complexed with manganese, UDP and 1'-deoxyglucose.</title>
        <authorList>
            <person name="Chaikuad A."/>
            <person name="Froese D.S."/>
            <person name="Krysztofinska E."/>
            <person name="von Delft F."/>
            <person name="Weigelt J."/>
            <person name="Arrowsmith C.H."/>
            <person name="Edwards A.M."/>
            <person name="Bountra C."/>
            <person name="Oppermann U."/>
            <person name="Yue W.W."/>
        </authorList>
    </citation>
    <scope>X-RAY CRYSTALLOGRAPHY (1.77 ANGSTROMS) OF 1-262 IN COMPLEX WITH 1,5-ANHYDRO-D-GLUCITOL; MANGANESE AND UDP</scope>
</reference>
<reference evidence="35 36" key="17">
    <citation type="journal article" date="2018" name="Nature">
        <title>Palladium-mediated enzyme activation suggests multiphase initiation of glycogenesis.</title>
        <authorList>
            <person name="Bilyard M.K."/>
            <person name="Bailey H.J."/>
            <person name="Raich L."/>
            <person name="Gafitescu M.A."/>
            <person name="Machida T."/>
            <person name="Iglesias-Fernandez J."/>
            <person name="Lee S.S."/>
            <person name="Spicer C.D."/>
            <person name="Rovira C."/>
            <person name="Yue W.W."/>
            <person name="Davis B.G."/>
        </authorList>
    </citation>
    <scope>X-RAY CRYSTALLOGRAPHY (2.18 ANGSTROMS) OF 1-262 IN COMPLEXES WITH UDP AND MANGANESE</scope>
    <scope>FUNCTION</scope>
    <scope>CATALYTIC ACTIVITY</scope>
    <scope>COFACTOR</scope>
    <scope>PATHWAY</scope>
    <scope>GLYCOSYLATION AT TYR-195</scope>
    <scope>ACTIVITY REGULATION</scope>
</reference>
<reference key="18">
    <citation type="journal article" date="2010" name="N. Engl. J. Med.">
        <title>Glycogenin-1 deficiency and inactivated priming of glycogen synthesis.</title>
        <authorList>
            <person name="Moslemi A.R."/>
            <person name="Lindberg C."/>
            <person name="Nilsson J."/>
            <person name="Tajsharghi H."/>
            <person name="Andersson B."/>
            <person name="Oldfors A."/>
        </authorList>
    </citation>
    <scope>VARIANT GSD15 MET-83</scope>
    <scope>CHARACTERIZATION OF VARIANT GSD15 MET-83</scope>
</reference>
<reference evidence="22" key="19">
    <citation type="journal article" date="2022" name="Nat. Commun.">
        <title>Mechanism of glycogen synthase inactivation and interaction with glycogenin.</title>
        <authorList>
            <person name="Marr L."/>
            <person name="Biswas D."/>
            <person name="Daly L.A."/>
            <person name="Browning C."/>
            <person name="Vial S.C.M."/>
            <person name="Maskell D.P."/>
            <person name="Hudson C."/>
            <person name="Bertrand J.A."/>
            <person name="Pollard J."/>
            <person name="Ranson N.A."/>
            <person name="Khatter H."/>
            <person name="Eyers C.E."/>
            <person name="Sakamoto K."/>
            <person name="Zeqiraj E."/>
        </authorList>
    </citation>
    <scope>STRUCTURE BY ELECTRON MICROSCOPY (2.62 ANGSTROMS) IN COMPLEX WITH GYS1</scope>
    <scope>SUBUNIT</scope>
    <scope>GLYCOSYLATION AT TYR-195</scope>
    <scope>MUTAGENESIS OF TYR-195</scope>
</reference>
<reference evidence="18 19 20 21" key="20">
    <citation type="journal article" date="2022" name="Nat. Struct. Mol. Biol.">
        <title>Molecular basis for the regulation of human glycogen synthase by phosphorylation and glucose-6-phosphate.</title>
        <authorList>
            <person name="McCorvie T.J."/>
            <person name="Loria P.M."/>
            <person name="Tu M."/>
            <person name="Han S."/>
            <person name="Shrestha L."/>
            <person name="Froese D.S."/>
            <person name="Ferreira I.M."/>
            <person name="Berg A.P."/>
            <person name="Yue W.W."/>
        </authorList>
    </citation>
    <scope>STRUCTURE BY ELECTRON MICROSCOPY (3.0 ANGSTROMS) IN COMPLEX WITH GYS1</scope>
    <scope>SUBUNIT</scope>
</reference>
<feature type="initiator methionine" description="Removed" evidence="37 38">
    <location>
        <position position="1"/>
    </location>
</feature>
<feature type="chain" id="PRO_0000215176" description="Glycogenin-1" evidence="16">
    <location>
        <begin position="2"/>
        <end position="350"/>
    </location>
</feature>
<feature type="region of interest" description="Interaction with GYS1" evidence="4">
    <location>
        <begin position="301"/>
        <end position="333"/>
    </location>
</feature>
<feature type="binding site" evidence="6 8 24 25 27 28 31 32 33 34 36">
    <location>
        <position position="9"/>
    </location>
    <ligand>
        <name>UDP</name>
        <dbReference type="ChEBI" id="CHEBI:58223"/>
    </ligand>
</feature>
<feature type="binding site" evidence="6 26 29">
    <location>
        <position position="9"/>
    </location>
    <ligand>
        <name>UDP-alpha-D-glucose</name>
        <dbReference type="ChEBI" id="CHEBI:58885"/>
    </ligand>
</feature>
<feature type="binding site" evidence="6 8 24 25 27 28 31 32 33 34 36">
    <location>
        <position position="11"/>
    </location>
    <ligand>
        <name>UDP</name>
        <dbReference type="ChEBI" id="CHEBI:58223"/>
    </ligand>
</feature>
<feature type="binding site" evidence="6 26 29">
    <location>
        <position position="11"/>
    </location>
    <ligand>
        <name>UDP-alpha-D-glucose</name>
        <dbReference type="ChEBI" id="CHEBI:58885"/>
    </ligand>
</feature>
<feature type="binding site" evidence="6 8 27 33 36">
    <location>
        <position position="12"/>
    </location>
    <ligand>
        <name>UDP</name>
        <dbReference type="ChEBI" id="CHEBI:58223"/>
    </ligand>
</feature>
<feature type="binding site" evidence="2">
    <location>
        <position position="12"/>
    </location>
    <ligand>
        <name>UDP-alpha-D-glucose</name>
        <dbReference type="ChEBI" id="CHEBI:58885"/>
    </ligand>
</feature>
<feature type="binding site" evidence="6 8 24 25 27 28 31 32 33 34 36">
    <location>
        <position position="15"/>
    </location>
    <ligand>
        <name>UDP</name>
        <dbReference type="ChEBI" id="CHEBI:58223"/>
    </ligand>
</feature>
<feature type="binding site" evidence="6 26 29">
    <location>
        <position position="15"/>
    </location>
    <ligand>
        <name>UDP-alpha-D-glucose</name>
        <dbReference type="ChEBI" id="CHEBI:58885"/>
    </ligand>
</feature>
<feature type="binding site" evidence="6 27 28 31 32 33 34">
    <location>
        <position position="77"/>
    </location>
    <ligand>
        <name>UDP</name>
        <dbReference type="ChEBI" id="CHEBI:58223"/>
    </ligand>
</feature>
<feature type="binding site" evidence="6 29">
    <location>
        <position position="77"/>
    </location>
    <ligand>
        <name>UDP-alpha-D-glucose</name>
        <dbReference type="ChEBI" id="CHEBI:58885"/>
    </ligand>
</feature>
<feature type="binding site" evidence="6 29">
    <location>
        <position position="86"/>
    </location>
    <ligand>
        <name>UDP-alpha-D-glucose</name>
        <dbReference type="ChEBI" id="CHEBI:58885"/>
    </ligand>
</feature>
<feature type="binding site" evidence="6 8 24 25 26 27 28 29 30 31 32 33 34 36">
    <location>
        <position position="102"/>
    </location>
    <ligand>
        <name>Mn(2+)</name>
        <dbReference type="ChEBI" id="CHEBI:29035"/>
    </ligand>
</feature>
<feature type="binding site" evidence="2">
    <location>
        <position position="102"/>
    </location>
    <ligand>
        <name>UDP</name>
        <dbReference type="ChEBI" id="CHEBI:58223"/>
    </ligand>
</feature>
<feature type="binding site" evidence="6 26 29">
    <location>
        <position position="102"/>
    </location>
    <ligand>
        <name>UDP-alpha-D-glucose</name>
        <dbReference type="ChEBI" id="CHEBI:58885"/>
    </ligand>
</feature>
<feature type="binding site" evidence="6 8 24 25 27 28 31 32 33 34 36">
    <location>
        <position position="103"/>
    </location>
    <ligand>
        <name>UDP</name>
        <dbReference type="ChEBI" id="CHEBI:58223"/>
    </ligand>
</feature>
<feature type="binding site" evidence="26 29">
    <location>
        <position position="103"/>
    </location>
    <ligand>
        <name>UDP-alpha-D-glucose</name>
        <dbReference type="ChEBI" id="CHEBI:58885"/>
    </ligand>
</feature>
<feature type="binding site" evidence="6 8 24 25 26 27 28 29 30 31 32 33 34 36">
    <location>
        <position position="104"/>
    </location>
    <ligand>
        <name>Mn(2+)</name>
        <dbReference type="ChEBI" id="CHEBI:29035"/>
    </ligand>
</feature>
<feature type="binding site" evidence="6 8 24 25 27 28 31 32 33 34 36">
    <location>
        <position position="104"/>
    </location>
    <ligand>
        <name>UDP</name>
        <dbReference type="ChEBI" id="CHEBI:58223"/>
    </ligand>
</feature>
<feature type="binding site" evidence="6 26 29">
    <location>
        <position position="104"/>
    </location>
    <ligand>
        <name>UDP-alpha-D-glucose</name>
        <dbReference type="ChEBI" id="CHEBI:58885"/>
    </ligand>
</feature>
<feature type="binding site" evidence="6 26 29">
    <location>
        <position position="133"/>
    </location>
    <ligand>
        <name>UDP-alpha-D-glucose</name>
        <dbReference type="ChEBI" id="CHEBI:58885"/>
    </ligand>
</feature>
<feature type="binding site" evidence="6 29">
    <location>
        <position position="134"/>
    </location>
    <ligand>
        <name>UDP-alpha-D-glucose</name>
        <dbReference type="ChEBI" id="CHEBI:58885"/>
    </ligand>
</feature>
<feature type="binding site" evidence="6 29">
    <location>
        <position position="160"/>
    </location>
    <ligand>
        <name>UDP-alpha-D-glucose</name>
        <dbReference type="ChEBI" id="CHEBI:58885"/>
    </ligand>
</feature>
<feature type="binding site" evidence="6 26 29">
    <location>
        <position position="163"/>
    </location>
    <ligand>
        <name>UDP-alpha-D-glucose</name>
        <dbReference type="ChEBI" id="CHEBI:58885"/>
    </ligand>
</feature>
<feature type="binding site" evidence="6 26 29">
    <location>
        <position position="164"/>
    </location>
    <ligand>
        <name>UDP-alpha-D-glucose</name>
        <dbReference type="ChEBI" id="CHEBI:58885"/>
    </ligand>
</feature>
<feature type="binding site" evidence="6 8 24 25 26 27 28 29 30 31 32 33 34 36">
    <location>
        <position position="212"/>
    </location>
    <ligand>
        <name>Mn(2+)</name>
        <dbReference type="ChEBI" id="CHEBI:29035"/>
    </ligand>
</feature>
<feature type="binding site" evidence="2">
    <location>
        <position position="212"/>
    </location>
    <ligand>
        <name>UDP</name>
        <dbReference type="ChEBI" id="CHEBI:58223"/>
    </ligand>
</feature>
<feature type="binding site" evidence="6 8 24 25 27 28 31 32 33 34 36">
    <location>
        <position position="215"/>
    </location>
    <ligand>
        <name>UDP</name>
        <dbReference type="ChEBI" id="CHEBI:58223"/>
    </ligand>
</feature>
<feature type="binding site" evidence="6 26 29">
    <location>
        <position position="215"/>
    </location>
    <ligand>
        <name>UDP-alpha-D-glucose</name>
        <dbReference type="ChEBI" id="CHEBI:58885"/>
    </ligand>
</feature>
<feature type="binding site" evidence="6 8 24 25 27 28 31 32 33 34 36">
    <location>
        <position position="218"/>
    </location>
    <ligand>
        <name>UDP</name>
        <dbReference type="ChEBI" id="CHEBI:58223"/>
    </ligand>
</feature>
<feature type="binding site" evidence="6 26 29">
    <location>
        <position position="218"/>
    </location>
    <ligand>
        <name>UDP-alpha-D-glucose</name>
        <dbReference type="ChEBI" id="CHEBI:58885"/>
    </ligand>
</feature>
<feature type="site" description="Important for catalytic activity" evidence="2">
    <location>
        <position position="86"/>
    </location>
</feature>
<feature type="modified residue" description="N-acetylthreonine" evidence="37 38">
    <location>
        <position position="2"/>
    </location>
</feature>
<feature type="modified residue" description="Phosphoserine" evidence="2">
    <location>
        <position position="44"/>
    </location>
</feature>
<feature type="glycosylation site" description="O-linked (Glc...) tyrosine" evidence="6 8 31 32">
    <location>
        <position position="195"/>
    </location>
</feature>
<feature type="splice variant" id="VSP_001768" description="In isoform GN-1S." evidence="16">
    <original>FGASAKVVHFLGRVKPWNYTYDPKTKSVKSEAHDPNMTHPEFLILWWNIFTTNVLPLLQQFGLVKDTCSYVNVLSDLVYTLAFSCGFCRKEDVSGAISHLSLGEIPAMAQPFVSSEERKERWEQGQADYMGADSFDNIKRKLDTYLQ</original>
    <variation>KMSQEPYHICPLGRSQLWHSRLYPRKNGRNDGNRARLIIWEQIPLTTSRGNLTLTSSRNTAFFCEHIHFTSLVSDT</variation>
    <location>
        <begin position="204"/>
        <end position="350"/>
    </location>
</feature>
<feature type="splice variant" id="VSP_001769" description="In isoform GN-1." evidence="12 13 14 15">
    <location>
        <begin position="277"/>
        <end position="293"/>
    </location>
</feature>
<feature type="sequence variant" id="VAR_072706" description="In PGBM2; dbSNP:rs200947378." evidence="7">
    <original>A</original>
    <variation>P</variation>
    <location>
        <position position="16"/>
    </location>
</feature>
<feature type="sequence variant" id="VAR_063768" description="In GSD15; loss of autoglucosylation; dbSNP:rs267606858." evidence="5 6">
    <original>T</original>
    <variation>M</variation>
    <location>
        <position position="83"/>
    </location>
</feature>
<feature type="sequence variant" id="VAR_072707" description="In PGBM2; dbSNP:rs143137713." evidence="7">
    <original>D</original>
    <variation>H</variation>
    <location>
        <position position="102"/>
    </location>
</feature>
<feature type="mutagenesis site" description="Loss of glucosylation." evidence="6 9">
    <original>Y</original>
    <variation>F</variation>
    <location>
        <position position="195"/>
    </location>
</feature>
<feature type="strand" evidence="40">
    <location>
        <begin position="4"/>
        <end position="12"/>
    </location>
</feature>
<feature type="helix" evidence="40">
    <location>
        <begin position="13"/>
        <end position="28"/>
    </location>
</feature>
<feature type="strand" evidence="40">
    <location>
        <begin position="33"/>
        <end position="39"/>
    </location>
</feature>
<feature type="helix" evidence="40">
    <location>
        <begin position="45"/>
        <end position="54"/>
    </location>
</feature>
<feature type="strand" evidence="40">
    <location>
        <begin position="55"/>
        <end position="60"/>
    </location>
</feature>
<feature type="helix" evidence="40">
    <location>
        <begin position="69"/>
        <end position="74"/>
    </location>
</feature>
<feature type="helix" evidence="40">
    <location>
        <begin position="80"/>
        <end position="91"/>
    </location>
</feature>
<feature type="strand" evidence="40">
    <location>
        <begin position="96"/>
        <end position="101"/>
    </location>
</feature>
<feature type="strand" evidence="40">
    <location>
        <begin position="105"/>
        <end position="107"/>
    </location>
</feature>
<feature type="helix" evidence="40">
    <location>
        <begin position="112"/>
        <end position="116"/>
    </location>
</feature>
<feature type="strand" evidence="40">
    <location>
        <begin position="119"/>
        <end position="124"/>
    </location>
</feature>
<feature type="strand" evidence="41">
    <location>
        <begin position="126"/>
        <end position="128"/>
    </location>
</feature>
<feature type="strand" evidence="40">
    <location>
        <begin position="131"/>
        <end position="139"/>
    </location>
</feature>
<feature type="helix" evidence="40">
    <location>
        <begin position="143"/>
        <end position="156"/>
    </location>
</feature>
<feature type="strand" evidence="39">
    <location>
        <begin position="159"/>
        <end position="161"/>
    </location>
</feature>
<feature type="helix" evidence="40">
    <location>
        <begin position="163"/>
        <end position="170"/>
    </location>
</feature>
<feature type="turn" evidence="40">
    <location>
        <begin position="171"/>
        <end position="176"/>
    </location>
</feature>
<feature type="helix" evidence="40">
    <location>
        <begin position="179"/>
        <end position="181"/>
    </location>
</feature>
<feature type="helix" evidence="40">
    <location>
        <begin position="185"/>
        <end position="187"/>
    </location>
</feature>
<feature type="strand" evidence="40">
    <location>
        <begin position="188"/>
        <end position="190"/>
    </location>
</feature>
<feature type="helix" evidence="40">
    <location>
        <begin position="191"/>
        <end position="195"/>
    </location>
</feature>
<feature type="helix" evidence="40">
    <location>
        <begin position="198"/>
        <end position="204"/>
    </location>
</feature>
<feature type="helix" evidence="40">
    <location>
        <begin position="205"/>
        <end position="207"/>
    </location>
</feature>
<feature type="strand" evidence="40">
    <location>
        <begin position="209"/>
        <end position="212"/>
    </location>
</feature>
<feature type="strand" evidence="40">
    <location>
        <begin position="215"/>
        <end position="217"/>
    </location>
</feature>
<feature type="helix" evidence="40">
    <location>
        <begin position="219"/>
        <end position="221"/>
    </location>
</feature>
<feature type="strand" evidence="40">
    <location>
        <begin position="222"/>
        <end position="225"/>
    </location>
</feature>
<feature type="turn" evidence="40">
    <location>
        <begin position="226"/>
        <end position="229"/>
    </location>
</feature>
<feature type="strand" evidence="40">
    <location>
        <begin position="230"/>
        <end position="232"/>
    </location>
</feature>
<feature type="helix" evidence="40">
    <location>
        <begin position="238"/>
        <end position="240"/>
    </location>
</feature>
<feature type="helix" evidence="40">
    <location>
        <begin position="244"/>
        <end position="256"/>
    </location>
</feature>
<feature type="helix" evidence="40">
    <location>
        <begin position="258"/>
        <end position="261"/>
    </location>
</feature>
<feature type="helix" evidence="44">
    <location>
        <begin position="319"/>
        <end position="327"/>
    </location>
</feature>
<feature type="turn" evidence="43">
    <location>
        <begin position="332"/>
        <end position="336"/>
    </location>
</feature>
<feature type="helix" evidence="42">
    <location>
        <begin position="340"/>
        <end position="347"/>
    </location>
</feature>
<accession>P46976</accession>
<accession>D3DNH0</accession>
<accession>D3DNH1</accession>
<accession>D3DNH2</accession>
<accession>Q6FHZ1</accession>
<accession>Q9UNV0</accession>
<evidence type="ECO:0000250" key="1">
    <source>
        <dbReference type="UniProtKB" id="C4R941"/>
    </source>
</evidence>
<evidence type="ECO:0000250" key="2">
    <source>
        <dbReference type="UniProtKB" id="P13280"/>
    </source>
</evidence>
<evidence type="ECO:0000250" key="3">
    <source>
        <dbReference type="UniProtKB" id="Q9R062"/>
    </source>
</evidence>
<evidence type="ECO:0000269" key="4">
    <source>
    </source>
</evidence>
<evidence type="ECO:0000269" key="5">
    <source>
    </source>
</evidence>
<evidence type="ECO:0000269" key="6">
    <source>
    </source>
</evidence>
<evidence type="ECO:0000269" key="7">
    <source>
    </source>
</evidence>
<evidence type="ECO:0000269" key="8">
    <source>
    </source>
</evidence>
<evidence type="ECO:0000269" key="9">
    <source>
    </source>
</evidence>
<evidence type="ECO:0000269" key="10">
    <source>
    </source>
</evidence>
<evidence type="ECO:0000269" key="11">
    <source>
    </source>
</evidence>
<evidence type="ECO:0000303" key="12">
    <source>
    </source>
</evidence>
<evidence type="ECO:0000303" key="13">
    <source>
    </source>
</evidence>
<evidence type="ECO:0000303" key="14">
    <source>
    </source>
</evidence>
<evidence type="ECO:0000303" key="15">
    <source ref="6"/>
</evidence>
<evidence type="ECO:0000305" key="16"/>
<evidence type="ECO:0000312" key="17">
    <source>
        <dbReference type="HGNC" id="HGNC:4699"/>
    </source>
</evidence>
<evidence type="ECO:0000312" key="18">
    <source>
        <dbReference type="PDB" id="7Q0B"/>
    </source>
</evidence>
<evidence type="ECO:0000312" key="19">
    <source>
        <dbReference type="PDB" id="7Q0S"/>
    </source>
</evidence>
<evidence type="ECO:0000312" key="20">
    <source>
        <dbReference type="PDB" id="7Q12"/>
    </source>
</evidence>
<evidence type="ECO:0000312" key="21">
    <source>
        <dbReference type="PDB" id="7Q13"/>
    </source>
</evidence>
<evidence type="ECO:0000312" key="22">
    <source>
        <dbReference type="PDB" id="7ZBN"/>
    </source>
</evidence>
<evidence type="ECO:0007744" key="23">
    <source>
        <dbReference type="PDB" id="3Q4S"/>
    </source>
</evidence>
<evidence type="ECO:0007744" key="24">
    <source>
        <dbReference type="PDB" id="3QVB"/>
    </source>
</evidence>
<evidence type="ECO:0007744" key="25">
    <source>
        <dbReference type="PDB" id="3RMV"/>
    </source>
</evidence>
<evidence type="ECO:0007744" key="26">
    <source>
        <dbReference type="PDB" id="3RMW"/>
    </source>
</evidence>
<evidence type="ECO:0007744" key="27">
    <source>
        <dbReference type="PDB" id="3T7M"/>
    </source>
</evidence>
<evidence type="ECO:0007744" key="28">
    <source>
        <dbReference type="PDB" id="3T7N"/>
    </source>
</evidence>
<evidence type="ECO:0007744" key="29">
    <source>
        <dbReference type="PDB" id="3T7O"/>
    </source>
</evidence>
<evidence type="ECO:0007744" key="30">
    <source>
        <dbReference type="PDB" id="3U2T"/>
    </source>
</evidence>
<evidence type="ECO:0007744" key="31">
    <source>
        <dbReference type="PDB" id="3U2U"/>
    </source>
</evidence>
<evidence type="ECO:0007744" key="32">
    <source>
        <dbReference type="PDB" id="3U2V"/>
    </source>
</evidence>
<evidence type="ECO:0007744" key="33">
    <source>
        <dbReference type="PDB" id="3U2W"/>
    </source>
</evidence>
<evidence type="ECO:0007744" key="34">
    <source>
        <dbReference type="PDB" id="3U2X"/>
    </source>
</evidence>
<evidence type="ECO:0007744" key="35">
    <source>
        <dbReference type="PDB" id="6EQJ"/>
    </source>
</evidence>
<evidence type="ECO:0007744" key="36">
    <source>
        <dbReference type="PDB" id="6EQL"/>
    </source>
</evidence>
<evidence type="ECO:0007744" key="37">
    <source>
    </source>
</evidence>
<evidence type="ECO:0007744" key="38">
    <source>
    </source>
</evidence>
<evidence type="ECO:0007829" key="39">
    <source>
        <dbReference type="PDB" id="3RMV"/>
    </source>
</evidence>
<evidence type="ECO:0007829" key="40">
    <source>
        <dbReference type="PDB" id="3U2U"/>
    </source>
</evidence>
<evidence type="ECO:0007829" key="41">
    <source>
        <dbReference type="PDB" id="3U2W"/>
    </source>
</evidence>
<evidence type="ECO:0007829" key="42">
    <source>
        <dbReference type="PDB" id="7OVX"/>
    </source>
</evidence>
<evidence type="ECO:0007829" key="43">
    <source>
        <dbReference type="PDB" id="7Q0B"/>
    </source>
</evidence>
<evidence type="ECO:0007829" key="44">
    <source>
        <dbReference type="PDB" id="7ZBN"/>
    </source>
</evidence>
<sequence length="350" mass="39384">MTDQAFVTLTTNDAYAKGALVLGSSLKQHRTTRRLVVLATPQVSDSMRKVLETVFDEVIMVDVLDSGDSAHLTLMKRPELGVTLTKLHCWSLTQYSKCVFMDADTLVLANIDDLFDREELSAAPDPGWPDCFNSGVFVYQPSVETYNQLLHLASEQGSFDGGDQGILNTFFSSWATTDIRKHLPFIYNLSSISIYSYLPAFKVFGASAKVVHFLGRVKPWNYTYDPKTKSVKSEAHDPNMTHPEFLILWWNIFTTNVLPLLQQFGLVKDTCSYVNVLSDLVYTLAFSCGFCRKEDVSGAISHLSLGEIPAMAQPFVSSEERKERWEQGQADYMGADSFDNIKRKLDTYLQ</sequence>
<gene>
    <name evidence="17" type="primary">GYG1</name>
    <name evidence="17" type="synonym">GYG</name>
</gene>